<organism>
    <name type="scientific">Drosophila melanogaster</name>
    <name type="common">Fruit fly</name>
    <dbReference type="NCBI Taxonomy" id="7227"/>
    <lineage>
        <taxon>Eukaryota</taxon>
        <taxon>Metazoa</taxon>
        <taxon>Ecdysozoa</taxon>
        <taxon>Arthropoda</taxon>
        <taxon>Hexapoda</taxon>
        <taxon>Insecta</taxon>
        <taxon>Pterygota</taxon>
        <taxon>Neoptera</taxon>
        <taxon>Endopterygota</taxon>
        <taxon>Diptera</taxon>
        <taxon>Brachycera</taxon>
        <taxon>Muscomorpha</taxon>
        <taxon>Ephydroidea</taxon>
        <taxon>Drosophilidae</taxon>
        <taxon>Drosophila</taxon>
        <taxon>Sophophora</taxon>
    </lineage>
</organism>
<sequence length="1883" mass="211828">MSQALNESANSIGSDEQDDTREEANGTDHSGSGSGSGSSGSDSDSDSSSGNSSDGRSSPEPEDKSLSVAGFPPTAAAAQADSKTNGFTDDQEDSSSDGSSGSDSDSDAEGPSDQRNQSINNANTSSSLPKPEQNEEEDNETEAGQQQPASDASADESSDSSANVSPTSSSSSSEEEEEDYRPKRTRQARKPPTAAEKSKKAPAPKNKKKTWDSDESDESEDSDDEVSTAQKRKPAATTSRSKLAQQQQRRRVKPFSSEDSDDDDASKRCATRRKGAAVSYKEASEDEATDSEDLLEFEYDESQAATTAATAEEEEKCETIERILAQRAGKRGCTGNQTTIYAIEENGFDPHAGFDEKQTPDAETEAQFLIKWKGWSYIHNTWESEATLRDMKAKGMKKLDNFIKKEKEQAYWRRYAGPEDIDYFECQLELQHELLKSYNNVDRIIAKGSKPDDGTEEYLCKWQSLPYAESTWEDAALVLRKWQRCAEQFNDRESSKCTPSRHCRVIKYRPKFSRIKNQPEFLSSGLTLRDYQMDGLNWLLHSWCKENSVILADEMGLGKTIQTICFLYSLFKIHHLYGPFLCVVPLSTMTAWQREFDLWAPDMNVVTYLGDIKSRELIQQYEWQFESSKRLKFNCILTTYEIVLKDKQFLGTLQWAALLVDEAHRLKNDDSLLYKSLKEFDTNHRLLITGTPLQNSLKELWALLHFIMPDKFDTWENFEVQHGNAEDKGYTRLHQQLEPYILRRVKKDVEKSLPAKVEQILRVEMTSLQKQYYKWILTKNFDALRKGKRGSTSTFLNIVIELKKCCNHAALIRPSEFELMGLQQDEALQTLLKGSGKLVLLDKLLCRLKETGHRVLIFSQMVRMLDVLADYLQKRHFPFQRLDGSIKGEMRRQALDHFNAEGSQDFCFLLSTRAGGLGINLATADTVIIFDSDWNPQNDLQAQARAHRIGQKNQVNIYRLVTARSVEEQIVERAKQKMVLDHLVIQRMDTTGRTVLDKSGNGHSSNSNPFNKDDLSAILKFGAEELFKDEQEHDDDLVCDIDEILRRAETRNEDPEMPADDLLSAFKVASIAAFEEEPSDSVSKQDQNAAGEEDDSKDWDDIIPEGFRKAIDDQERAKEMEDLYLPPRRKTAANQNEGKRGAGKGGKGKQQADDSGGDSDYELGSDGSGDDGRPRKRGRPTMKEKITGFTDAELRRFIRSYKKFPAPLHRMEAIACDAELQEKPLAELKRLGEMLHDRCVQFLHEHKEEESKTAATDETPGAKQRRARATFSVKLGGVSFNAKKLLACEQELQPLNEIMPSMPEERQQWSFNIKTRAPVFDVDWGIEEDTKLLCGIYQYGIGSWEQMKLDPTLKLTDKILLNDTRKPQAKQLQTRAEYLLKIIKKNVELTKGGQRRQRRPRASRANDAKAASQSASSTIDAKPHDGEDAAGDARTVAESSNSQVDPSTASPHNAPATEQHGDPAKKAKKSKARSKKTSASDNNGNKPMHFTANNEPRALEVLGDLDPSIFNECKEKMRPVKKALKALDQPDVSLSDQDQLQHTRDCLLQIGKQIDVCLNPYAETEKKEWRSNLWYFVSKFTELDAKRLFKIYKHALKQKAGGDGEAKGKDKGSSGSPAKSKPNGVTTEEKEKERDRSGGKKKKKDKDKERSGQARYPETGIPTSGRYADPPLKRKRDENDADASSGLAGAPGGGIGDNLKSMSFKRLNMDRHEDRKKHHRGPDYYGGSGPPMGSGSYEGGSNSRRQGPTSPSTPRTGRGGYDPPPAPSGYTPEMERWQSRDRYSQDYKRDRYDGYGRSGGGQGSYHRERDRRPEKRRYPSGLPPHPYSSHYLPPNYYGLPNGAVPGLPPPSSVYRSDPRGYPVMPRDYPADYRRSDYERRTQT</sequence>
<comment type="function">
    <text evidence="1 8 9 10">ATP-dependent chromatin-remodeling factor which functions as substrate recognition component of the transcription regulatory histone acetylation (HAT) complex SAGA. Regulates polymerase II transcription. Also required for efficient transcription by RNA polymerase I, and more specifically the polymerase I transcription termination step. Regulates negatively DNA replication. Not only involved in transcription-related chromatin remodeling, but also required to maintain a specific chromatin configuration across the genome (By similarity). Involved in assembly of active chromatin. Required for maintaining open chromatin and pluripotency in embryonic stem cells and is important for wing development and fertility. Is essential for the incorporation of histone H3.3 and assembly of paternal chromatin. Required for replication-independent nucleosome assembly in the decondensing male pronucleus.</text>
</comment>
<comment type="catalytic activity">
    <reaction evidence="8">
        <text>ATP + H2O = ADP + phosphate + H(+)</text>
        <dbReference type="Rhea" id="RHEA:13065"/>
        <dbReference type="ChEBI" id="CHEBI:15377"/>
        <dbReference type="ChEBI" id="CHEBI:15378"/>
        <dbReference type="ChEBI" id="CHEBI:30616"/>
        <dbReference type="ChEBI" id="CHEBI:43474"/>
        <dbReference type="ChEBI" id="CHEBI:456216"/>
    </reaction>
</comment>
<comment type="subunit">
    <text evidence="1 7 8">Monomer (PubMed:15643425). Component of the SAGA complex (By similarity). Interacts with SSRP1.</text>
</comment>
<comment type="subcellular location">
    <subcellularLocation>
        <location evidence="11">Nucleus</location>
    </subcellularLocation>
    <subcellularLocation>
        <location evidence="7 10 11">Chromosome</location>
    </subcellularLocation>
    <text>Colocalizes with elongating RNA polymerase II (Pol II) on polytene chromosomes (PubMed:18202396).</text>
</comment>
<comment type="domain">
    <text evidence="2">The 2 chromodomains are involved in the binding to the histone H3 methyllysine at position 4 (H3K4me3).</text>
</comment>
<comment type="domain">
    <text evidence="2">The CHD1 helical C-terminal domain (CHCT) binds DNA and nucleosomes.</text>
</comment>
<comment type="similarity">
    <text evidence="12">Belongs to the SNF2/RAD54 helicase family.</text>
</comment>
<dbReference type="EC" id="3.6.4.-" evidence="8"/>
<dbReference type="EMBL" id="L77907">
    <property type="protein sequence ID" value="AAC37264.1"/>
    <property type="molecule type" value="mRNA"/>
</dbReference>
<dbReference type="EMBL" id="AE014134">
    <property type="protein sequence ID" value="AAF51170.1"/>
    <property type="molecule type" value="Genomic_DNA"/>
</dbReference>
<dbReference type="PIR" id="T13944">
    <property type="entry name" value="T13944"/>
</dbReference>
<dbReference type="RefSeq" id="NP_477197.1">
    <property type="nucleotide sequence ID" value="NM_057849.5"/>
</dbReference>
<dbReference type="SMR" id="Q7KU24"/>
<dbReference type="BioGRID" id="59725">
    <property type="interactions" value="9"/>
</dbReference>
<dbReference type="FunCoup" id="Q7KU24">
    <property type="interactions" value="1813"/>
</dbReference>
<dbReference type="IntAct" id="Q7KU24">
    <property type="interactions" value="7"/>
</dbReference>
<dbReference type="MINT" id="Q7KU24"/>
<dbReference type="STRING" id="7227.FBpp0297122"/>
<dbReference type="GlyGen" id="Q7KU24">
    <property type="glycosylation" value="2 sites"/>
</dbReference>
<dbReference type="PaxDb" id="7227-FBpp0297122"/>
<dbReference type="EnsemblMetazoa" id="FBtr0077674">
    <property type="protein sequence ID" value="FBpp0077358"/>
    <property type="gene ID" value="FBgn0250786"/>
</dbReference>
<dbReference type="GeneID" id="33505"/>
<dbReference type="KEGG" id="dme:Dmel_CG3733"/>
<dbReference type="UCSC" id="CG3733-RA">
    <property type="organism name" value="d. melanogaster"/>
</dbReference>
<dbReference type="AGR" id="FB:FBgn0250786"/>
<dbReference type="CTD" id="1105"/>
<dbReference type="FlyBase" id="FBgn0250786">
    <property type="gene designation" value="Chd1"/>
</dbReference>
<dbReference type="VEuPathDB" id="VectorBase:FBgn0250786"/>
<dbReference type="eggNOG" id="KOG0384">
    <property type="taxonomic scope" value="Eukaryota"/>
</dbReference>
<dbReference type="GeneTree" id="ENSGT00940000170579"/>
<dbReference type="HOGENOM" id="CLU_000315_8_1_1"/>
<dbReference type="InParanoid" id="Q7KU24"/>
<dbReference type="OrthoDB" id="5857104at2759"/>
<dbReference type="PhylomeDB" id="Q7KU24"/>
<dbReference type="SignaLink" id="Q7KU24"/>
<dbReference type="BioGRID-ORCS" id="33505">
    <property type="hits" value="0 hits in 3 CRISPR screens"/>
</dbReference>
<dbReference type="ChiTaRS" id="Chd1">
    <property type="organism name" value="fly"/>
</dbReference>
<dbReference type="GenomeRNAi" id="33505"/>
<dbReference type="PRO" id="PR:Q7KU24"/>
<dbReference type="Proteomes" id="UP000000803">
    <property type="component" value="Chromosome 2L"/>
</dbReference>
<dbReference type="Bgee" id="FBgn0250786">
    <property type="expression patterns" value="Expressed in adult tracheocyte (Drosophila) in Malpighian tubule and 246 other cell types or tissues"/>
</dbReference>
<dbReference type="ExpressionAtlas" id="Q7KU24">
    <property type="expression patterns" value="baseline and differential"/>
</dbReference>
<dbReference type="GO" id="GO:0000785">
    <property type="term" value="C:chromatin"/>
    <property type="evidence" value="ECO:0000318"/>
    <property type="project" value="GO_Central"/>
</dbReference>
<dbReference type="GO" id="GO:0005634">
    <property type="term" value="C:nucleus"/>
    <property type="evidence" value="ECO:0000318"/>
    <property type="project" value="GO_Central"/>
</dbReference>
<dbReference type="GO" id="GO:0005705">
    <property type="term" value="C:polytene chromosome interband"/>
    <property type="evidence" value="ECO:0000314"/>
    <property type="project" value="FlyBase"/>
</dbReference>
<dbReference type="GO" id="GO:0005703">
    <property type="term" value="C:polytene chromosome puff"/>
    <property type="evidence" value="ECO:0000314"/>
    <property type="project" value="FlyBase"/>
</dbReference>
<dbReference type="GO" id="GO:0005524">
    <property type="term" value="F:ATP binding"/>
    <property type="evidence" value="ECO:0007669"/>
    <property type="project" value="UniProtKB-KW"/>
</dbReference>
<dbReference type="GO" id="GO:0016887">
    <property type="term" value="F:ATP hydrolysis activity"/>
    <property type="evidence" value="ECO:0000318"/>
    <property type="project" value="GO_Central"/>
</dbReference>
<dbReference type="GO" id="GO:0140658">
    <property type="term" value="F:ATP-dependent chromatin remodeler activity"/>
    <property type="evidence" value="ECO:0000250"/>
    <property type="project" value="FlyBase"/>
</dbReference>
<dbReference type="GO" id="GO:0003682">
    <property type="term" value="F:chromatin binding"/>
    <property type="evidence" value="ECO:0000314"/>
    <property type="project" value="FlyBase"/>
</dbReference>
<dbReference type="GO" id="GO:0003677">
    <property type="term" value="F:DNA binding"/>
    <property type="evidence" value="ECO:0000318"/>
    <property type="project" value="GO_Central"/>
</dbReference>
<dbReference type="GO" id="GO:0004386">
    <property type="term" value="F:helicase activity"/>
    <property type="evidence" value="ECO:0007669"/>
    <property type="project" value="UniProtKB-KW"/>
</dbReference>
<dbReference type="GO" id="GO:0042393">
    <property type="term" value="F:histone binding"/>
    <property type="evidence" value="ECO:0000318"/>
    <property type="project" value="GO_Central"/>
</dbReference>
<dbReference type="GO" id="GO:0007476">
    <property type="term" value="P:imaginal disc-derived wing morphogenesis"/>
    <property type="evidence" value="ECO:0000315"/>
    <property type="project" value="FlyBase"/>
</dbReference>
<dbReference type="GO" id="GO:0034728">
    <property type="term" value="P:nucleosome organization"/>
    <property type="evidence" value="ECO:0000318"/>
    <property type="project" value="GO_Central"/>
</dbReference>
<dbReference type="GO" id="GO:0048477">
    <property type="term" value="P:oogenesis"/>
    <property type="evidence" value="ECO:0000315"/>
    <property type="project" value="FlyBase"/>
</dbReference>
<dbReference type="GO" id="GO:0035041">
    <property type="term" value="P:sperm DNA decondensation"/>
    <property type="evidence" value="ECO:0000315"/>
    <property type="project" value="FlyBase"/>
</dbReference>
<dbReference type="CDD" id="cd18666">
    <property type="entry name" value="CD1_tandem_CHD1-2_like"/>
    <property type="match status" value="1"/>
</dbReference>
<dbReference type="CDD" id="cd18659">
    <property type="entry name" value="CD2_tandem"/>
    <property type="match status" value="1"/>
</dbReference>
<dbReference type="CDD" id="cd17993">
    <property type="entry name" value="DEXHc_CHD1_2"/>
    <property type="match status" value="1"/>
</dbReference>
<dbReference type="CDD" id="cd18793">
    <property type="entry name" value="SF2_C_SNF"/>
    <property type="match status" value="1"/>
</dbReference>
<dbReference type="FunFam" id="1.10.10.60:FF:000376">
    <property type="entry name" value="Chromodomain-helicase-DNA-binding protein 1"/>
    <property type="match status" value="1"/>
</dbReference>
<dbReference type="FunFam" id="2.40.50.40:FF:000014">
    <property type="entry name" value="Chromodomain-helicase-DNA-binding protein 2 isoform 1"/>
    <property type="match status" value="1"/>
</dbReference>
<dbReference type="FunFam" id="3.40.50.10810:FF:000007">
    <property type="entry name" value="Chromodomain-helicase-DNA-binding protein 2 isoform 1"/>
    <property type="match status" value="1"/>
</dbReference>
<dbReference type="FunFam" id="3.40.50.300:FF:000130">
    <property type="entry name" value="Chromodomain-helicase-DNA-binding protein 2 isoform 1"/>
    <property type="match status" value="1"/>
</dbReference>
<dbReference type="Gene3D" id="2.40.50.40">
    <property type="match status" value="2"/>
</dbReference>
<dbReference type="Gene3D" id="1.10.10.60">
    <property type="entry name" value="Homeodomain-like"/>
    <property type="match status" value="1"/>
</dbReference>
<dbReference type="Gene3D" id="3.40.50.300">
    <property type="entry name" value="P-loop containing nucleotide triphosphate hydrolases"/>
    <property type="match status" value="1"/>
</dbReference>
<dbReference type="Gene3D" id="3.40.50.10810">
    <property type="entry name" value="Tandem AAA-ATPase domain"/>
    <property type="match status" value="1"/>
</dbReference>
<dbReference type="InterPro" id="IPR040793">
    <property type="entry name" value="CDH1_2_SANT_HL1"/>
</dbReference>
<dbReference type="InterPro" id="IPR056302">
    <property type="entry name" value="CHD1-2/Hrp3_HTH"/>
</dbReference>
<dbReference type="InterPro" id="IPR025260">
    <property type="entry name" value="CHD1-like_C"/>
</dbReference>
<dbReference type="InterPro" id="IPR016197">
    <property type="entry name" value="Chromo-like_dom_sf"/>
</dbReference>
<dbReference type="InterPro" id="IPR000953">
    <property type="entry name" value="Chromo/chromo_shadow_dom"/>
</dbReference>
<dbReference type="InterPro" id="IPR023780">
    <property type="entry name" value="Chromo_domain"/>
</dbReference>
<dbReference type="InterPro" id="IPR023779">
    <property type="entry name" value="Chromodomain_CS"/>
</dbReference>
<dbReference type="InterPro" id="IPR002464">
    <property type="entry name" value="DNA/RNA_helicase_DEAH_CS"/>
</dbReference>
<dbReference type="InterPro" id="IPR014001">
    <property type="entry name" value="Helicase_ATP-bd"/>
</dbReference>
<dbReference type="InterPro" id="IPR001650">
    <property type="entry name" value="Helicase_C-like"/>
</dbReference>
<dbReference type="InterPro" id="IPR027417">
    <property type="entry name" value="P-loop_NTPase"/>
</dbReference>
<dbReference type="InterPro" id="IPR038718">
    <property type="entry name" value="SNF2-like_sf"/>
</dbReference>
<dbReference type="InterPro" id="IPR049730">
    <property type="entry name" value="SNF2/RAD54-like_C"/>
</dbReference>
<dbReference type="InterPro" id="IPR000330">
    <property type="entry name" value="SNF2_N"/>
</dbReference>
<dbReference type="PANTHER" id="PTHR45623:SF14">
    <property type="entry name" value="CHROMODOMAIN-HELICASE-DNA-BINDING PROTEIN 1"/>
    <property type="match status" value="1"/>
</dbReference>
<dbReference type="PANTHER" id="PTHR45623">
    <property type="entry name" value="CHROMODOMAIN-HELICASE-DNA-BINDING PROTEIN 3-RELATED-RELATED"/>
    <property type="match status" value="1"/>
</dbReference>
<dbReference type="Pfam" id="PF18375">
    <property type="entry name" value="CDH1_2_SANT_HL1"/>
    <property type="match status" value="1"/>
</dbReference>
<dbReference type="Pfam" id="PF13907">
    <property type="entry name" value="CHD1-like_C"/>
    <property type="match status" value="1"/>
</dbReference>
<dbReference type="Pfam" id="PF00385">
    <property type="entry name" value="Chromo"/>
    <property type="match status" value="2"/>
</dbReference>
<dbReference type="Pfam" id="PF00271">
    <property type="entry name" value="Helicase_C"/>
    <property type="match status" value="1"/>
</dbReference>
<dbReference type="Pfam" id="PF23588">
    <property type="entry name" value="HTH_CHD1_Hrp3"/>
    <property type="match status" value="1"/>
</dbReference>
<dbReference type="Pfam" id="PF00176">
    <property type="entry name" value="SNF2-rel_dom"/>
    <property type="match status" value="1"/>
</dbReference>
<dbReference type="SMART" id="SM00298">
    <property type="entry name" value="CHROMO"/>
    <property type="match status" value="2"/>
</dbReference>
<dbReference type="SMART" id="SM00487">
    <property type="entry name" value="DEXDc"/>
    <property type="match status" value="1"/>
</dbReference>
<dbReference type="SMART" id="SM01176">
    <property type="entry name" value="DUF4208"/>
    <property type="match status" value="1"/>
</dbReference>
<dbReference type="SMART" id="SM00490">
    <property type="entry name" value="HELICc"/>
    <property type="match status" value="1"/>
</dbReference>
<dbReference type="SUPFAM" id="SSF54160">
    <property type="entry name" value="Chromo domain-like"/>
    <property type="match status" value="2"/>
</dbReference>
<dbReference type="SUPFAM" id="SSF52540">
    <property type="entry name" value="P-loop containing nucleoside triphosphate hydrolases"/>
    <property type="match status" value="2"/>
</dbReference>
<dbReference type="PROSITE" id="PS00598">
    <property type="entry name" value="CHROMO_1"/>
    <property type="match status" value="1"/>
</dbReference>
<dbReference type="PROSITE" id="PS50013">
    <property type="entry name" value="CHROMO_2"/>
    <property type="match status" value="2"/>
</dbReference>
<dbReference type="PROSITE" id="PS00690">
    <property type="entry name" value="DEAH_ATP_HELICASE"/>
    <property type="match status" value="1"/>
</dbReference>
<dbReference type="PROSITE" id="PS51192">
    <property type="entry name" value="HELICASE_ATP_BIND_1"/>
    <property type="match status" value="1"/>
</dbReference>
<dbReference type="PROSITE" id="PS51194">
    <property type="entry name" value="HELICASE_CTER"/>
    <property type="match status" value="1"/>
</dbReference>
<name>CHD1_DROME</name>
<protein>
    <recommendedName>
        <fullName>Chromodomain-helicase-DNA-binding protein 1</fullName>
        <shortName>CHD-1</shortName>
        <ecNumber evidence="8">3.6.4.-</ecNumber>
    </recommendedName>
    <alternativeName>
        <fullName>ATP-dependent helicase Chd1</fullName>
    </alternativeName>
</protein>
<proteinExistence type="evidence at protein level"/>
<gene>
    <name type="primary">Chd1</name>
    <name type="ORF">CG3733</name>
</gene>
<evidence type="ECO:0000250" key="1"/>
<evidence type="ECO:0000250" key="2">
    <source>
        <dbReference type="UniProtKB" id="O14646"/>
    </source>
</evidence>
<evidence type="ECO:0000255" key="3">
    <source>
        <dbReference type="PROSITE-ProRule" id="PRU00053"/>
    </source>
</evidence>
<evidence type="ECO:0000255" key="4">
    <source>
        <dbReference type="PROSITE-ProRule" id="PRU00541"/>
    </source>
</evidence>
<evidence type="ECO:0000255" key="5">
    <source>
        <dbReference type="PROSITE-ProRule" id="PRU00542"/>
    </source>
</evidence>
<evidence type="ECO:0000256" key="6">
    <source>
        <dbReference type="SAM" id="MobiDB-lite"/>
    </source>
</evidence>
<evidence type="ECO:0000269" key="7">
    <source>
    </source>
</evidence>
<evidence type="ECO:0000269" key="8">
    <source>
    </source>
</evidence>
<evidence type="ECO:0000269" key="9">
    <source>
    </source>
</evidence>
<evidence type="ECO:0000269" key="10">
    <source>
    </source>
</evidence>
<evidence type="ECO:0000269" key="11">
    <source>
    </source>
</evidence>
<evidence type="ECO:0000305" key="12"/>
<reference key="1">
    <citation type="journal article" date="1996" name="Proc. Natl. Acad. Sci. U.S.A.">
        <title>CHD1 is concentrated in interbands and puffed regions of Drosophila polytene chromosomes.</title>
        <authorList>
            <person name="Stokes D.G."/>
            <person name="Tartof K.D."/>
            <person name="Perry R.P."/>
        </authorList>
    </citation>
    <scope>NUCLEOTIDE SEQUENCE [MRNA]</scope>
    <scope>SUBCELLULAR LOCATION</scope>
</reference>
<reference key="2">
    <citation type="journal article" date="2000" name="Science">
        <title>The genome sequence of Drosophila melanogaster.</title>
        <authorList>
            <person name="Adams M.D."/>
            <person name="Celniker S.E."/>
            <person name="Holt R.A."/>
            <person name="Evans C.A."/>
            <person name="Gocayne J.D."/>
            <person name="Amanatides P.G."/>
            <person name="Scherer S.E."/>
            <person name="Li P.W."/>
            <person name="Hoskins R.A."/>
            <person name="Galle R.F."/>
            <person name="George R.A."/>
            <person name="Lewis S.E."/>
            <person name="Richards S."/>
            <person name="Ashburner M."/>
            <person name="Henderson S.N."/>
            <person name="Sutton G.G."/>
            <person name="Wortman J.R."/>
            <person name="Yandell M.D."/>
            <person name="Zhang Q."/>
            <person name="Chen L.X."/>
            <person name="Brandon R.C."/>
            <person name="Rogers Y.-H.C."/>
            <person name="Blazej R.G."/>
            <person name="Champe M."/>
            <person name="Pfeiffer B.D."/>
            <person name="Wan K.H."/>
            <person name="Doyle C."/>
            <person name="Baxter E.G."/>
            <person name="Helt G."/>
            <person name="Nelson C.R."/>
            <person name="Miklos G.L.G."/>
            <person name="Abril J.F."/>
            <person name="Agbayani A."/>
            <person name="An H.-J."/>
            <person name="Andrews-Pfannkoch C."/>
            <person name="Baldwin D."/>
            <person name="Ballew R.M."/>
            <person name="Basu A."/>
            <person name="Baxendale J."/>
            <person name="Bayraktaroglu L."/>
            <person name="Beasley E.M."/>
            <person name="Beeson K.Y."/>
            <person name="Benos P.V."/>
            <person name="Berman B.P."/>
            <person name="Bhandari D."/>
            <person name="Bolshakov S."/>
            <person name="Borkova D."/>
            <person name="Botchan M.R."/>
            <person name="Bouck J."/>
            <person name="Brokstein P."/>
            <person name="Brottier P."/>
            <person name="Burtis K.C."/>
            <person name="Busam D.A."/>
            <person name="Butler H."/>
            <person name="Cadieu E."/>
            <person name="Center A."/>
            <person name="Chandra I."/>
            <person name="Cherry J.M."/>
            <person name="Cawley S."/>
            <person name="Dahlke C."/>
            <person name="Davenport L.B."/>
            <person name="Davies P."/>
            <person name="de Pablos B."/>
            <person name="Delcher A."/>
            <person name="Deng Z."/>
            <person name="Mays A.D."/>
            <person name="Dew I."/>
            <person name="Dietz S.M."/>
            <person name="Dodson K."/>
            <person name="Doup L.E."/>
            <person name="Downes M."/>
            <person name="Dugan-Rocha S."/>
            <person name="Dunkov B.C."/>
            <person name="Dunn P."/>
            <person name="Durbin K.J."/>
            <person name="Evangelista C.C."/>
            <person name="Ferraz C."/>
            <person name="Ferriera S."/>
            <person name="Fleischmann W."/>
            <person name="Fosler C."/>
            <person name="Gabrielian A.E."/>
            <person name="Garg N.S."/>
            <person name="Gelbart W.M."/>
            <person name="Glasser K."/>
            <person name="Glodek A."/>
            <person name="Gong F."/>
            <person name="Gorrell J.H."/>
            <person name="Gu Z."/>
            <person name="Guan P."/>
            <person name="Harris M."/>
            <person name="Harris N.L."/>
            <person name="Harvey D.A."/>
            <person name="Heiman T.J."/>
            <person name="Hernandez J.R."/>
            <person name="Houck J."/>
            <person name="Hostin D."/>
            <person name="Houston K.A."/>
            <person name="Howland T.J."/>
            <person name="Wei M.-H."/>
            <person name="Ibegwam C."/>
            <person name="Jalali M."/>
            <person name="Kalush F."/>
            <person name="Karpen G.H."/>
            <person name="Ke Z."/>
            <person name="Kennison J.A."/>
            <person name="Ketchum K.A."/>
            <person name="Kimmel B.E."/>
            <person name="Kodira C.D."/>
            <person name="Kraft C.L."/>
            <person name="Kravitz S."/>
            <person name="Kulp D."/>
            <person name="Lai Z."/>
            <person name="Lasko P."/>
            <person name="Lei Y."/>
            <person name="Levitsky A.A."/>
            <person name="Li J.H."/>
            <person name="Li Z."/>
            <person name="Liang Y."/>
            <person name="Lin X."/>
            <person name="Liu X."/>
            <person name="Mattei B."/>
            <person name="McIntosh T.C."/>
            <person name="McLeod M.P."/>
            <person name="McPherson D."/>
            <person name="Merkulov G."/>
            <person name="Milshina N.V."/>
            <person name="Mobarry C."/>
            <person name="Morris J."/>
            <person name="Moshrefi A."/>
            <person name="Mount S.M."/>
            <person name="Moy M."/>
            <person name="Murphy B."/>
            <person name="Murphy L."/>
            <person name="Muzny D.M."/>
            <person name="Nelson D.L."/>
            <person name="Nelson D.R."/>
            <person name="Nelson K.A."/>
            <person name="Nixon K."/>
            <person name="Nusskern D.R."/>
            <person name="Pacleb J.M."/>
            <person name="Palazzolo M."/>
            <person name="Pittman G.S."/>
            <person name="Pan S."/>
            <person name="Pollard J."/>
            <person name="Puri V."/>
            <person name="Reese M.G."/>
            <person name="Reinert K."/>
            <person name="Remington K."/>
            <person name="Saunders R.D.C."/>
            <person name="Scheeler F."/>
            <person name="Shen H."/>
            <person name="Shue B.C."/>
            <person name="Siden-Kiamos I."/>
            <person name="Simpson M."/>
            <person name="Skupski M.P."/>
            <person name="Smith T.J."/>
            <person name="Spier E."/>
            <person name="Spradling A.C."/>
            <person name="Stapleton M."/>
            <person name="Strong R."/>
            <person name="Sun E."/>
            <person name="Svirskas R."/>
            <person name="Tector C."/>
            <person name="Turner R."/>
            <person name="Venter E."/>
            <person name="Wang A.H."/>
            <person name="Wang X."/>
            <person name="Wang Z.-Y."/>
            <person name="Wassarman D.A."/>
            <person name="Weinstock G.M."/>
            <person name="Weissenbach J."/>
            <person name="Williams S.M."/>
            <person name="Woodage T."/>
            <person name="Worley K.C."/>
            <person name="Wu D."/>
            <person name="Yang S."/>
            <person name="Yao Q.A."/>
            <person name="Ye J."/>
            <person name="Yeh R.-F."/>
            <person name="Zaveri J.S."/>
            <person name="Zhan M."/>
            <person name="Zhang G."/>
            <person name="Zhao Q."/>
            <person name="Zheng L."/>
            <person name="Zheng X.H."/>
            <person name="Zhong F.N."/>
            <person name="Zhong W."/>
            <person name="Zhou X."/>
            <person name="Zhu S.C."/>
            <person name="Zhu X."/>
            <person name="Smith H.O."/>
            <person name="Gibbs R.A."/>
            <person name="Myers E.W."/>
            <person name="Rubin G.M."/>
            <person name="Venter J.C."/>
        </authorList>
    </citation>
    <scope>NUCLEOTIDE SEQUENCE [LARGE SCALE GENOMIC DNA]</scope>
    <source>
        <strain>Berkeley</strain>
    </source>
</reference>
<reference key="3">
    <citation type="journal article" date="2002" name="Genome Biol.">
        <title>Annotation of the Drosophila melanogaster euchromatic genome: a systematic review.</title>
        <authorList>
            <person name="Misra S."/>
            <person name="Crosby M.A."/>
            <person name="Mungall C.J."/>
            <person name="Matthews B.B."/>
            <person name="Campbell K.S."/>
            <person name="Hradecky P."/>
            <person name="Huang Y."/>
            <person name="Kaminker J.S."/>
            <person name="Millburn G.H."/>
            <person name="Prochnik S.E."/>
            <person name="Smith C.D."/>
            <person name="Tupy J.L."/>
            <person name="Whitfield E.J."/>
            <person name="Bayraktaroglu L."/>
            <person name="Berman B.P."/>
            <person name="Bettencourt B.R."/>
            <person name="Celniker S.E."/>
            <person name="de Grey A.D.N.J."/>
            <person name="Drysdale R.A."/>
            <person name="Harris N.L."/>
            <person name="Richter J."/>
            <person name="Russo S."/>
            <person name="Schroeder A.J."/>
            <person name="Shu S.Q."/>
            <person name="Stapleton M."/>
            <person name="Yamada C."/>
            <person name="Ashburner M."/>
            <person name="Gelbart W.M."/>
            <person name="Rubin G.M."/>
            <person name="Lewis S.E."/>
        </authorList>
    </citation>
    <scope>GENOME REANNOTATION</scope>
    <source>
        <strain>Berkeley</strain>
    </source>
</reference>
<reference key="4">
    <citation type="journal article" date="1999" name="Chromosoma">
        <title>CHD1 interacts with SSRP1 and depends on both its chromodomain and its ATPase/helicase-like domain for proper association with chromatin.</title>
        <authorList>
            <person name="Kelley D.E."/>
            <person name="Stokes D.G."/>
            <person name="Perry R.P."/>
        </authorList>
    </citation>
    <scope>SUBCELLULAR LOCATION</scope>
    <scope>INTERACTION WITH SSRP1</scope>
</reference>
<reference key="5">
    <citation type="journal article" date="2005" name="Nat. Struct. Mol. Biol.">
        <title>Distinct activities of CHD1 and ACF in ATP-dependent chromatin assembly.</title>
        <authorList>
            <person name="Lusser A."/>
            <person name="Urwin D.L."/>
            <person name="Kadonaga J.T."/>
        </authorList>
    </citation>
    <scope>FUNCTION</scope>
    <scope>CATALYTIC ACTIVITY</scope>
    <scope>SUBUNIT</scope>
</reference>
<reference key="6">
    <citation type="journal article" date="2007" name="Nat. Struct. Mol. Biol.">
        <title>The trithorax-group gene in Drosophila little imaginal discs encodes a trimethylated histone H3 Lys4 demethylase.</title>
        <authorList>
            <person name="Eissenberg J.C."/>
            <person name="Lee M.G."/>
            <person name="Schneider J."/>
            <person name="Ilvarsonn A."/>
            <person name="Shiekhattar R."/>
            <person name="Shilatifard A."/>
        </authorList>
    </citation>
    <scope>SUBCELLULAR LOCATION</scope>
</reference>
<reference key="7">
    <citation type="journal article" date="2007" name="Science">
        <title>CHD1 motor protein is required for deposition of histone variant H3.3 into chromatin in vivo.</title>
        <authorList>
            <person name="Konev A.Y."/>
            <person name="Tribus M."/>
            <person name="Park S.Y."/>
            <person name="Podhraski V."/>
            <person name="Lim C.Y."/>
            <person name="Emelyanov A.V."/>
            <person name="Vershilova E."/>
            <person name="Pirrotta V."/>
            <person name="Kadonaga J.T."/>
            <person name="Lusser A."/>
            <person name="Fyodorov D.V."/>
        </authorList>
    </citation>
    <scope>FUNCTION</scope>
</reference>
<reference key="8">
    <citation type="journal article" date="2008" name="Genetics">
        <title>Investigations of CHD1 function in transcription and development of Drosophila melanogaster.</title>
        <authorList>
            <person name="McDaniel I.E."/>
            <person name="Lee J.M."/>
            <person name="Berger M.S."/>
            <person name="Hanagami C.K."/>
            <person name="Armstrong J.A."/>
        </authorList>
    </citation>
    <scope>FUNCTION</scope>
    <scope>SUBCELLULAR LOCATION</scope>
</reference>
<feature type="chain" id="PRO_0000388773" description="Chromodomain-helicase-DNA-binding protein 1">
    <location>
        <begin position="1"/>
        <end position="1883"/>
    </location>
</feature>
<feature type="domain" description="Chromo 1" evidence="3">
    <location>
        <begin position="318"/>
        <end position="414"/>
    </location>
</feature>
<feature type="domain" description="Chromo 2" evidence="3">
    <location>
        <begin position="439"/>
        <end position="501"/>
    </location>
</feature>
<feature type="domain" description="Helicase ATP-binding" evidence="4">
    <location>
        <begin position="540"/>
        <end position="710"/>
    </location>
</feature>
<feature type="domain" description="Helicase C-terminal" evidence="5">
    <location>
        <begin position="840"/>
        <end position="991"/>
    </location>
</feature>
<feature type="region of interest" description="Disordered" evidence="6">
    <location>
        <begin position="1"/>
        <end position="293"/>
    </location>
</feature>
<feature type="region of interest" description="Disordered" evidence="6">
    <location>
        <begin position="1074"/>
        <end position="1185"/>
    </location>
</feature>
<feature type="region of interest" description="Disordered" evidence="6">
    <location>
        <begin position="1246"/>
        <end position="1265"/>
    </location>
</feature>
<feature type="region of interest" description="Disordered" evidence="6">
    <location>
        <begin position="1390"/>
        <end position="1491"/>
    </location>
</feature>
<feature type="region of interest" description="CHD1 helical C-terminal domain (CHCT)" evidence="2">
    <location>
        <begin position="1505"/>
        <end position="1606"/>
    </location>
</feature>
<feature type="region of interest" description="Disordered" evidence="6">
    <location>
        <begin position="1599"/>
        <end position="1829"/>
    </location>
</feature>
<feature type="region of interest" description="Disordered" evidence="6">
    <location>
        <begin position="1848"/>
        <end position="1883"/>
    </location>
</feature>
<feature type="short sequence motif" description="DEAH box">
    <location>
        <begin position="661"/>
        <end position="664"/>
    </location>
</feature>
<feature type="compositionally biased region" description="Polar residues" evidence="6">
    <location>
        <begin position="1"/>
        <end position="14"/>
    </location>
</feature>
<feature type="compositionally biased region" description="Low complexity" evidence="6">
    <location>
        <begin position="39"/>
        <end position="56"/>
    </location>
</feature>
<feature type="compositionally biased region" description="Polar residues" evidence="6">
    <location>
        <begin position="114"/>
        <end position="128"/>
    </location>
</feature>
<feature type="compositionally biased region" description="Low complexity" evidence="6">
    <location>
        <begin position="159"/>
        <end position="172"/>
    </location>
</feature>
<feature type="compositionally biased region" description="Acidic residues" evidence="6">
    <location>
        <begin position="213"/>
        <end position="226"/>
    </location>
</feature>
<feature type="compositionally biased region" description="Polar residues" evidence="6">
    <location>
        <begin position="236"/>
        <end position="247"/>
    </location>
</feature>
<feature type="compositionally biased region" description="Acidic residues" evidence="6">
    <location>
        <begin position="284"/>
        <end position="293"/>
    </location>
</feature>
<feature type="compositionally biased region" description="Acidic residues" evidence="6">
    <location>
        <begin position="1091"/>
        <end position="1103"/>
    </location>
</feature>
<feature type="compositionally biased region" description="Basic and acidic residues" evidence="6">
    <location>
        <begin position="1106"/>
        <end position="1121"/>
    </location>
</feature>
<feature type="compositionally biased region" description="Basic residues" evidence="6">
    <location>
        <begin position="1393"/>
        <end position="1402"/>
    </location>
</feature>
<feature type="compositionally biased region" description="Polar residues" evidence="6">
    <location>
        <begin position="1437"/>
        <end position="1451"/>
    </location>
</feature>
<feature type="compositionally biased region" description="Basic residues" evidence="6">
    <location>
        <begin position="1466"/>
        <end position="1476"/>
    </location>
</feature>
<feature type="compositionally biased region" description="Basic and acidic residues" evidence="6">
    <location>
        <begin position="1600"/>
        <end position="1612"/>
    </location>
</feature>
<feature type="compositionally biased region" description="Low complexity" evidence="6">
    <location>
        <begin position="1613"/>
        <end position="1622"/>
    </location>
</feature>
<feature type="compositionally biased region" description="Basic and acidic residues" evidence="6">
    <location>
        <begin position="1627"/>
        <end position="1638"/>
    </location>
</feature>
<feature type="compositionally biased region" description="Gly residues" evidence="6">
    <location>
        <begin position="1724"/>
        <end position="1738"/>
    </location>
</feature>
<feature type="compositionally biased region" description="Polar residues" evidence="6">
    <location>
        <begin position="1742"/>
        <end position="1755"/>
    </location>
</feature>
<feature type="compositionally biased region" description="Basic and acidic residues" evidence="6">
    <location>
        <begin position="1773"/>
        <end position="1794"/>
    </location>
</feature>
<feature type="compositionally biased region" description="Basic and acidic residues" evidence="6">
    <location>
        <begin position="1805"/>
        <end position="1817"/>
    </location>
</feature>
<feature type="compositionally biased region" description="Basic and acidic residues" evidence="6">
    <location>
        <begin position="1868"/>
        <end position="1883"/>
    </location>
</feature>
<feature type="binding site" evidence="4">
    <location>
        <begin position="553"/>
        <end position="560"/>
    </location>
    <ligand>
        <name>ATP</name>
        <dbReference type="ChEBI" id="CHEBI:30616"/>
    </ligand>
</feature>
<feature type="sequence conflict" description="In Ref. 1; AAC37264." evidence="12" ref="1">
    <original>Y</original>
    <variation>H</variation>
    <location>
        <position position="730"/>
    </location>
</feature>
<feature type="sequence conflict" description="In Ref. 1; AAC37264." evidence="12" ref="1">
    <original>T</original>
    <variation>N</variation>
    <location>
        <position position="1448"/>
    </location>
</feature>
<feature type="sequence conflict" description="In Ref. 1; AAC37264." evidence="12" ref="1">
    <original>R</original>
    <variation>S</variation>
    <location>
        <position position="1745"/>
    </location>
</feature>
<feature type="sequence conflict" description="In Ref. 1; AAC37264." evidence="12" ref="1">
    <original>S</original>
    <variation>I</variation>
    <location>
        <position position="1804"/>
    </location>
</feature>
<keyword id="KW-0067">ATP-binding</keyword>
<keyword id="KW-0156">Chromatin regulator</keyword>
<keyword id="KW-0158">Chromosome</keyword>
<keyword id="KW-0238">DNA-binding</keyword>
<keyword id="KW-0378">Hydrolase</keyword>
<keyword id="KW-0547">Nucleotide-binding</keyword>
<keyword id="KW-0539">Nucleus</keyword>
<keyword id="KW-1185">Reference proteome</keyword>
<keyword id="KW-0677">Repeat</keyword>
<keyword id="KW-0804">Transcription</keyword>
<keyword id="KW-0805">Transcription regulation</keyword>
<accession>Q7KU24</accession>
<accession>Q24376</accession>
<accession>Q9VQJ9</accession>